<accession>P29696</accession>
<comment type="function">
    <text>Catalyzes the oxidation of 3-carboxy-2-hydroxy-4-methylpentanoate (3-isopropylmalate) to 3-carboxy-4-methyl-2-oxopentanoate. The product decarboxylates to 4-methyl-2 oxopentanoate.</text>
</comment>
<comment type="catalytic activity">
    <reaction>
        <text>(2R,3S)-3-isopropylmalate + NAD(+) = 4-methyl-2-oxopentanoate + CO2 + NADH</text>
        <dbReference type="Rhea" id="RHEA:32271"/>
        <dbReference type="ChEBI" id="CHEBI:16526"/>
        <dbReference type="ChEBI" id="CHEBI:17865"/>
        <dbReference type="ChEBI" id="CHEBI:35121"/>
        <dbReference type="ChEBI" id="CHEBI:57540"/>
        <dbReference type="ChEBI" id="CHEBI:57945"/>
        <dbReference type="EC" id="1.1.1.85"/>
    </reaction>
</comment>
<comment type="cofactor">
    <cofactor evidence="1">
        <name>Mg(2+)</name>
        <dbReference type="ChEBI" id="CHEBI:18420"/>
    </cofactor>
    <cofactor evidence="1">
        <name>Mn(2+)</name>
        <dbReference type="ChEBI" id="CHEBI:29035"/>
    </cofactor>
    <text evidence="1">Binds 1 Mg(2+) or Mn(2+) ion per subunit.</text>
</comment>
<comment type="pathway">
    <text>Amino-acid biosynthesis; L-leucine biosynthesis; L-leucine from 3-methyl-2-oxobutanoate: step 3/4.</text>
</comment>
<comment type="subunit">
    <text evidence="1">Homodimer.</text>
</comment>
<comment type="subcellular location">
    <subcellularLocation>
        <location>Plastid</location>
        <location>Chloroplast</location>
    </subcellularLocation>
</comment>
<comment type="similarity">
    <text evidence="3">Belongs to the isocitrate and isopropylmalate dehydrogenases family.</text>
</comment>
<dbReference type="EC" id="1.1.1.85"/>
<dbReference type="EMBL" id="X67310">
    <property type="protein sequence ID" value="CAA47720.1"/>
    <property type="molecule type" value="mRNA"/>
</dbReference>
<dbReference type="PIR" id="S30897">
    <property type="entry name" value="S30897"/>
</dbReference>
<dbReference type="RefSeq" id="NP_001305547.1">
    <property type="nucleotide sequence ID" value="NM_001318618.1"/>
</dbReference>
<dbReference type="SMR" id="P29696"/>
<dbReference type="FunCoup" id="P29696">
    <property type="interactions" value="2578"/>
</dbReference>
<dbReference type="STRING" id="4113.P29696"/>
<dbReference type="PaxDb" id="4113-PGSC0003DMT400067503"/>
<dbReference type="ProMEX" id="P29696"/>
<dbReference type="GeneID" id="102592957"/>
<dbReference type="KEGG" id="sot:102592957"/>
<dbReference type="eggNOG" id="KOG0785">
    <property type="taxonomic scope" value="Eukaryota"/>
</dbReference>
<dbReference type="InParanoid" id="P29696"/>
<dbReference type="OrthoDB" id="10261637at2759"/>
<dbReference type="UniPathway" id="UPA00048">
    <property type="reaction ID" value="UER00072"/>
</dbReference>
<dbReference type="Proteomes" id="UP000011115">
    <property type="component" value="Unassembled WGS sequence"/>
</dbReference>
<dbReference type="ExpressionAtlas" id="P29696">
    <property type="expression patterns" value="baseline and differential"/>
</dbReference>
<dbReference type="GO" id="GO:0009507">
    <property type="term" value="C:chloroplast"/>
    <property type="evidence" value="ECO:0007669"/>
    <property type="project" value="UniProtKB-SubCell"/>
</dbReference>
<dbReference type="GO" id="GO:0005739">
    <property type="term" value="C:mitochondrion"/>
    <property type="evidence" value="ECO:0000318"/>
    <property type="project" value="GO_Central"/>
</dbReference>
<dbReference type="GO" id="GO:0003862">
    <property type="term" value="F:3-isopropylmalate dehydrogenase activity"/>
    <property type="evidence" value="ECO:0007669"/>
    <property type="project" value="UniProtKB-EC"/>
</dbReference>
<dbReference type="GO" id="GO:0004449">
    <property type="term" value="F:isocitrate dehydrogenase (NAD+) activity"/>
    <property type="evidence" value="ECO:0000318"/>
    <property type="project" value="GO_Central"/>
</dbReference>
<dbReference type="GO" id="GO:0000287">
    <property type="term" value="F:magnesium ion binding"/>
    <property type="evidence" value="ECO:0007669"/>
    <property type="project" value="InterPro"/>
</dbReference>
<dbReference type="GO" id="GO:0051287">
    <property type="term" value="F:NAD binding"/>
    <property type="evidence" value="ECO:0007669"/>
    <property type="project" value="InterPro"/>
</dbReference>
<dbReference type="GO" id="GO:0006102">
    <property type="term" value="P:isocitrate metabolic process"/>
    <property type="evidence" value="ECO:0000318"/>
    <property type="project" value="GO_Central"/>
</dbReference>
<dbReference type="GO" id="GO:0009098">
    <property type="term" value="P:L-leucine biosynthetic process"/>
    <property type="evidence" value="ECO:0007669"/>
    <property type="project" value="UniProtKB-UniPathway"/>
</dbReference>
<dbReference type="GO" id="GO:0006099">
    <property type="term" value="P:tricarboxylic acid cycle"/>
    <property type="evidence" value="ECO:0000318"/>
    <property type="project" value="GO_Central"/>
</dbReference>
<dbReference type="FunFam" id="3.40.718.10:FF:000003">
    <property type="entry name" value="Isocitrate dehydrogenase [NAD] subunit, mitochondrial"/>
    <property type="match status" value="1"/>
</dbReference>
<dbReference type="Gene3D" id="3.40.718.10">
    <property type="entry name" value="Isopropylmalate Dehydrogenase"/>
    <property type="match status" value="1"/>
</dbReference>
<dbReference type="InterPro" id="IPR019818">
    <property type="entry name" value="IsoCit/isopropylmalate_DH_CS"/>
</dbReference>
<dbReference type="InterPro" id="IPR004434">
    <property type="entry name" value="Isocitrate_DH_NAD"/>
</dbReference>
<dbReference type="InterPro" id="IPR024084">
    <property type="entry name" value="IsoPropMal-DH-like_dom"/>
</dbReference>
<dbReference type="NCBIfam" id="TIGR00175">
    <property type="entry name" value="mito_nad_idh"/>
    <property type="match status" value="1"/>
</dbReference>
<dbReference type="PANTHER" id="PTHR11835">
    <property type="entry name" value="DECARBOXYLATING DEHYDROGENASES-ISOCITRATE, ISOPROPYLMALATE, TARTRATE"/>
    <property type="match status" value="1"/>
</dbReference>
<dbReference type="PANTHER" id="PTHR11835:SF34">
    <property type="entry name" value="ISOCITRATE DEHYDROGENASE [NAD] SUBUNIT ALPHA, MITOCHONDRIAL"/>
    <property type="match status" value="1"/>
</dbReference>
<dbReference type="Pfam" id="PF00180">
    <property type="entry name" value="Iso_dh"/>
    <property type="match status" value="1"/>
</dbReference>
<dbReference type="SMART" id="SM01329">
    <property type="entry name" value="Iso_dh"/>
    <property type="match status" value="1"/>
</dbReference>
<dbReference type="SUPFAM" id="SSF53659">
    <property type="entry name" value="Isocitrate/Isopropylmalate dehydrogenase-like"/>
    <property type="match status" value="1"/>
</dbReference>
<dbReference type="PROSITE" id="PS00470">
    <property type="entry name" value="IDH_IMDH"/>
    <property type="match status" value="1"/>
</dbReference>
<feature type="transit peptide" description="Chloroplast" evidence="2">
    <location>
        <begin position="1"/>
        <end position="29"/>
    </location>
</feature>
<feature type="chain" id="PRO_0000014457" description="3-isopropylmalate dehydrogenase, chloroplastic">
    <location>
        <begin position="30"/>
        <end position="357"/>
    </location>
</feature>
<feature type="binding site" evidence="1">
    <location>
        <position position="120"/>
    </location>
    <ligand>
        <name>substrate</name>
    </ligand>
</feature>
<feature type="binding site" evidence="1">
    <location>
        <position position="130"/>
    </location>
    <ligand>
        <name>substrate</name>
    </ligand>
</feature>
<feature type="binding site" evidence="1">
    <location>
        <position position="151"/>
    </location>
    <ligand>
        <name>substrate</name>
    </ligand>
</feature>
<feature type="binding site" evidence="1">
    <location>
        <position position="238"/>
    </location>
    <ligand>
        <name>Mg(2+)</name>
        <dbReference type="ChEBI" id="CHEBI:18420"/>
    </ligand>
</feature>
<feature type="binding site" evidence="1">
    <location>
        <position position="238"/>
    </location>
    <ligand>
        <name>substrate</name>
    </ligand>
</feature>
<feature type="binding site" evidence="1">
    <location>
        <position position="262"/>
    </location>
    <ligand>
        <name>Mg(2+)</name>
        <dbReference type="ChEBI" id="CHEBI:18420"/>
    </ligand>
</feature>
<feature type="binding site" evidence="1">
    <location>
        <position position="266"/>
    </location>
    <ligand>
        <name>Mg(2+)</name>
        <dbReference type="ChEBI" id="CHEBI:18420"/>
    </ligand>
</feature>
<feature type="binding site" evidence="1">
    <location>
        <begin position="296"/>
        <end position="308"/>
    </location>
    <ligand>
        <name>NAD(+)</name>
        <dbReference type="ChEBI" id="CHEBI:57540"/>
    </ligand>
</feature>
<feature type="site" description="Important for catalysis" evidence="1">
    <location>
        <position position="158"/>
    </location>
</feature>
<feature type="site" description="Important for catalysis" evidence="1">
    <location>
        <position position="205"/>
    </location>
</feature>
<evidence type="ECO:0000250" key="1"/>
<evidence type="ECO:0000255" key="2"/>
<evidence type="ECO:0000305" key="3"/>
<proteinExistence type="evidence at transcript level"/>
<sequence length="357" mass="39766">MALQIAKRLLRCRADSVASSVRFFDRTFTSESNSNLIRATLFPGDGIGPEIAESVRQIFKVAEVPIEWEEHYVGTEVDPRTNSFLTWESLESVRRNKVGLKGPMATPIGKGHRSLNLTLRKELNLYANVRPCYSLPGYKTRYDDVNLITIRENTEGEYSGLEHQVVRGVVESLKIITRQASLRVAEYAFHYAKTHGRERVSAIHKANIMQKTDGLFLKCCREVAEKYPEIKYEEVVIDNCCMMLVKNPALFDVLVMPNLYGDIISDLCAGLIGGLGLTPSCNIGEGGIALAEAVHGSAPDIAGKNLANPTALLLSSVSMLRHLELHDKADRIQDAILKTIAGGKVPNWRPWRHCYNN</sequence>
<organism>
    <name type="scientific">Solanum tuberosum</name>
    <name type="common">Potato</name>
    <dbReference type="NCBI Taxonomy" id="4113"/>
    <lineage>
        <taxon>Eukaryota</taxon>
        <taxon>Viridiplantae</taxon>
        <taxon>Streptophyta</taxon>
        <taxon>Embryophyta</taxon>
        <taxon>Tracheophyta</taxon>
        <taxon>Spermatophyta</taxon>
        <taxon>Magnoliopsida</taxon>
        <taxon>eudicotyledons</taxon>
        <taxon>Gunneridae</taxon>
        <taxon>Pentapetalae</taxon>
        <taxon>asterids</taxon>
        <taxon>lamiids</taxon>
        <taxon>Solanales</taxon>
        <taxon>Solanaceae</taxon>
        <taxon>Solanoideae</taxon>
        <taxon>Solaneae</taxon>
        <taxon>Solanum</taxon>
    </lineage>
</organism>
<protein>
    <recommendedName>
        <fullName>3-isopropylmalate dehydrogenase, chloroplastic</fullName>
        <shortName>3-IPM-DH</shortName>
        <shortName>IMDH</shortName>
        <ecNumber>1.1.1.85</ecNumber>
    </recommendedName>
    <alternativeName>
        <fullName>Beta-IPM dehydrogenase</fullName>
    </alternativeName>
</protein>
<name>LEU3_SOLTU</name>
<reference key="1">
    <citation type="journal article" date="1993" name="Mol. Gen. Genet.">
        <title>Cloning and expression analysis of beta-isopropylmalate dehydrogenase from potato.</title>
        <authorList>
            <person name="Jackson S.D."/>
            <person name="Sonnewald U."/>
            <person name="Willmitzer L."/>
        </authorList>
    </citation>
    <scope>NUCLEOTIDE SEQUENCE [MRNA]</scope>
    <source>
        <strain>cv. Desiree</strain>
        <tissue>Leaf</tissue>
    </source>
</reference>
<keyword id="KW-0028">Amino-acid biosynthesis</keyword>
<keyword id="KW-0100">Branched-chain amino acid biosynthesis</keyword>
<keyword id="KW-0150">Chloroplast</keyword>
<keyword id="KW-0432">Leucine biosynthesis</keyword>
<keyword id="KW-0460">Magnesium</keyword>
<keyword id="KW-0464">Manganese</keyword>
<keyword id="KW-0479">Metal-binding</keyword>
<keyword id="KW-0520">NAD</keyword>
<keyword id="KW-0560">Oxidoreductase</keyword>
<keyword id="KW-0934">Plastid</keyword>
<keyword id="KW-1185">Reference proteome</keyword>
<keyword id="KW-0809">Transit peptide</keyword>